<gene>
    <name evidence="1" type="primary">rpsH</name>
    <name type="ordered locus">Cag_1837</name>
</gene>
<organism>
    <name type="scientific">Chlorobium chlorochromatii (strain CaD3)</name>
    <dbReference type="NCBI Taxonomy" id="340177"/>
    <lineage>
        <taxon>Bacteria</taxon>
        <taxon>Pseudomonadati</taxon>
        <taxon>Chlorobiota</taxon>
        <taxon>Chlorobiia</taxon>
        <taxon>Chlorobiales</taxon>
        <taxon>Chlorobiaceae</taxon>
        <taxon>Chlorobium/Pelodictyon group</taxon>
        <taxon>Chlorobium</taxon>
    </lineage>
</organism>
<proteinExistence type="inferred from homology"/>
<dbReference type="EMBL" id="CP000108">
    <property type="protein sequence ID" value="ABB29088.1"/>
    <property type="molecule type" value="Genomic_DNA"/>
</dbReference>
<dbReference type="SMR" id="Q3API7"/>
<dbReference type="STRING" id="340177.Cag_1837"/>
<dbReference type="KEGG" id="cch:Cag_1837"/>
<dbReference type="eggNOG" id="COG0096">
    <property type="taxonomic scope" value="Bacteria"/>
</dbReference>
<dbReference type="HOGENOM" id="CLU_098428_0_2_10"/>
<dbReference type="OrthoDB" id="9802617at2"/>
<dbReference type="GO" id="GO:1990904">
    <property type="term" value="C:ribonucleoprotein complex"/>
    <property type="evidence" value="ECO:0007669"/>
    <property type="project" value="UniProtKB-KW"/>
</dbReference>
<dbReference type="GO" id="GO:0005840">
    <property type="term" value="C:ribosome"/>
    <property type="evidence" value="ECO:0007669"/>
    <property type="project" value="UniProtKB-KW"/>
</dbReference>
<dbReference type="GO" id="GO:0019843">
    <property type="term" value="F:rRNA binding"/>
    <property type="evidence" value="ECO:0007669"/>
    <property type="project" value="UniProtKB-UniRule"/>
</dbReference>
<dbReference type="GO" id="GO:0003735">
    <property type="term" value="F:structural constituent of ribosome"/>
    <property type="evidence" value="ECO:0007669"/>
    <property type="project" value="InterPro"/>
</dbReference>
<dbReference type="GO" id="GO:0006412">
    <property type="term" value="P:translation"/>
    <property type="evidence" value="ECO:0007669"/>
    <property type="project" value="UniProtKB-UniRule"/>
</dbReference>
<dbReference type="FunFam" id="3.30.1370.30:FF:000002">
    <property type="entry name" value="30S ribosomal protein S8"/>
    <property type="match status" value="1"/>
</dbReference>
<dbReference type="FunFam" id="3.30.1490.10:FF:000001">
    <property type="entry name" value="30S ribosomal protein S8"/>
    <property type="match status" value="1"/>
</dbReference>
<dbReference type="Gene3D" id="3.30.1370.30">
    <property type="match status" value="1"/>
</dbReference>
<dbReference type="Gene3D" id="3.30.1490.10">
    <property type="match status" value="1"/>
</dbReference>
<dbReference type="HAMAP" id="MF_01302_B">
    <property type="entry name" value="Ribosomal_uS8_B"/>
    <property type="match status" value="1"/>
</dbReference>
<dbReference type="InterPro" id="IPR000630">
    <property type="entry name" value="Ribosomal_uS8"/>
</dbReference>
<dbReference type="InterPro" id="IPR047863">
    <property type="entry name" value="Ribosomal_uS8_CS"/>
</dbReference>
<dbReference type="InterPro" id="IPR035987">
    <property type="entry name" value="Ribosomal_uS8_sf"/>
</dbReference>
<dbReference type="NCBIfam" id="NF001109">
    <property type="entry name" value="PRK00136.1"/>
    <property type="match status" value="1"/>
</dbReference>
<dbReference type="PANTHER" id="PTHR11758">
    <property type="entry name" value="40S RIBOSOMAL PROTEIN S15A"/>
    <property type="match status" value="1"/>
</dbReference>
<dbReference type="Pfam" id="PF00410">
    <property type="entry name" value="Ribosomal_S8"/>
    <property type="match status" value="1"/>
</dbReference>
<dbReference type="SUPFAM" id="SSF56047">
    <property type="entry name" value="Ribosomal protein S8"/>
    <property type="match status" value="1"/>
</dbReference>
<dbReference type="PROSITE" id="PS00053">
    <property type="entry name" value="RIBOSOMAL_S8"/>
    <property type="match status" value="1"/>
</dbReference>
<keyword id="KW-0687">Ribonucleoprotein</keyword>
<keyword id="KW-0689">Ribosomal protein</keyword>
<keyword id="KW-0694">RNA-binding</keyword>
<keyword id="KW-0699">rRNA-binding</keyword>
<name>RS8_CHLCH</name>
<sequence>MPVTDSIADYITRIRNAGRAKNSTTDIPYSKLKENISQLLLEKGYIKNFTVITTEKFPFLRIDLKYMQSGEPAIKELTRVSKPGRRVYDGKDIKKYLGGLGLYVLSSSKGVITDKEARAQGVGGEILFRIY</sequence>
<accession>Q3API7</accession>
<evidence type="ECO:0000255" key="1">
    <source>
        <dbReference type="HAMAP-Rule" id="MF_01302"/>
    </source>
</evidence>
<evidence type="ECO:0000305" key="2"/>
<protein>
    <recommendedName>
        <fullName evidence="1">Small ribosomal subunit protein uS8</fullName>
    </recommendedName>
    <alternativeName>
        <fullName evidence="2">30S ribosomal protein S8</fullName>
    </alternativeName>
</protein>
<feature type="chain" id="PRO_0000225864" description="Small ribosomal subunit protein uS8">
    <location>
        <begin position="1"/>
        <end position="131"/>
    </location>
</feature>
<reference key="1">
    <citation type="submission" date="2005-08" db="EMBL/GenBank/DDBJ databases">
        <title>Complete sequence of Chlorobium chlorochromatii CaD3.</title>
        <authorList>
            <consortium name="US DOE Joint Genome Institute"/>
            <person name="Copeland A."/>
            <person name="Lucas S."/>
            <person name="Lapidus A."/>
            <person name="Barry K."/>
            <person name="Detter J.C."/>
            <person name="Glavina T."/>
            <person name="Hammon N."/>
            <person name="Israni S."/>
            <person name="Pitluck S."/>
            <person name="Bryant D."/>
            <person name="Schmutz J."/>
            <person name="Larimer F."/>
            <person name="Land M."/>
            <person name="Kyrpides N."/>
            <person name="Ivanova N."/>
            <person name="Richardson P."/>
        </authorList>
    </citation>
    <scope>NUCLEOTIDE SEQUENCE [LARGE SCALE GENOMIC DNA]</scope>
    <source>
        <strain>CaD3</strain>
    </source>
</reference>
<comment type="function">
    <text evidence="1">One of the primary rRNA binding proteins, it binds directly to 16S rRNA central domain where it helps coordinate assembly of the platform of the 30S subunit.</text>
</comment>
<comment type="subunit">
    <text evidence="1">Part of the 30S ribosomal subunit. Contacts proteins S5 and S12.</text>
</comment>
<comment type="similarity">
    <text evidence="1">Belongs to the universal ribosomal protein uS8 family.</text>
</comment>